<reference key="1">
    <citation type="submission" date="2008-05" db="EMBL/GenBank/DDBJ databases">
        <title>Complete genome sequence of Clostridium botulinum E3 str. Alaska E43.</title>
        <authorList>
            <person name="Brinkac L.M."/>
            <person name="Brown J.L."/>
            <person name="Bruce D."/>
            <person name="Detter C."/>
            <person name="Munk C."/>
            <person name="Smith L.A."/>
            <person name="Smith T.J."/>
            <person name="Sutton G."/>
            <person name="Brettin T.S."/>
        </authorList>
    </citation>
    <scope>NUCLEOTIDE SEQUENCE [LARGE SCALE GENOMIC DNA]</scope>
    <source>
        <strain>Alaska E43 / Type E3</strain>
    </source>
</reference>
<evidence type="ECO:0000255" key="1">
    <source>
        <dbReference type="HAMAP-Rule" id="MF_01366"/>
    </source>
</evidence>
<evidence type="ECO:0000305" key="2"/>
<sequence>MKSYIAKAQEVERKWYVVDAAGKPLGRVASQVASILRGKNKPTFTPNVDCGDFVIVINAEEVALTGKKLDQKMLRKHSFYPGGLKETPYREVLAKKPEFAFEEAVRRMLPKGVLGRQMLKKLKVYRGAEHDHAAQKPEVLELKY</sequence>
<keyword id="KW-0687">Ribonucleoprotein</keyword>
<keyword id="KW-0689">Ribosomal protein</keyword>
<accession>B2UYE5</accession>
<name>RL13_CLOBA</name>
<protein>
    <recommendedName>
        <fullName evidence="1">Large ribosomal subunit protein uL13</fullName>
    </recommendedName>
    <alternativeName>
        <fullName evidence="2">50S ribosomal protein L13</fullName>
    </alternativeName>
</protein>
<organism>
    <name type="scientific">Clostridium botulinum (strain Alaska E43 / Type E3)</name>
    <dbReference type="NCBI Taxonomy" id="508767"/>
    <lineage>
        <taxon>Bacteria</taxon>
        <taxon>Bacillati</taxon>
        <taxon>Bacillota</taxon>
        <taxon>Clostridia</taxon>
        <taxon>Eubacteriales</taxon>
        <taxon>Clostridiaceae</taxon>
        <taxon>Clostridium</taxon>
    </lineage>
</organism>
<proteinExistence type="inferred from homology"/>
<comment type="function">
    <text evidence="1">This protein is one of the early assembly proteins of the 50S ribosomal subunit, although it is not seen to bind rRNA by itself. It is important during the early stages of 50S assembly.</text>
</comment>
<comment type="subunit">
    <text evidence="1">Part of the 50S ribosomal subunit.</text>
</comment>
<comment type="similarity">
    <text evidence="1">Belongs to the universal ribosomal protein uL13 family.</text>
</comment>
<gene>
    <name evidence="1" type="primary">rplM</name>
    <name type="ordered locus">CLH_0272</name>
</gene>
<dbReference type="EMBL" id="CP001078">
    <property type="protein sequence ID" value="ACD51614.1"/>
    <property type="molecule type" value="Genomic_DNA"/>
</dbReference>
<dbReference type="RefSeq" id="WP_003373361.1">
    <property type="nucleotide sequence ID" value="NC_010723.1"/>
</dbReference>
<dbReference type="SMR" id="B2UYE5"/>
<dbReference type="KEGG" id="cbt:CLH_0272"/>
<dbReference type="HOGENOM" id="CLU_082184_2_2_9"/>
<dbReference type="GO" id="GO:0022625">
    <property type="term" value="C:cytosolic large ribosomal subunit"/>
    <property type="evidence" value="ECO:0007669"/>
    <property type="project" value="TreeGrafter"/>
</dbReference>
<dbReference type="GO" id="GO:0003729">
    <property type="term" value="F:mRNA binding"/>
    <property type="evidence" value="ECO:0007669"/>
    <property type="project" value="TreeGrafter"/>
</dbReference>
<dbReference type="GO" id="GO:0003735">
    <property type="term" value="F:structural constituent of ribosome"/>
    <property type="evidence" value="ECO:0007669"/>
    <property type="project" value="InterPro"/>
</dbReference>
<dbReference type="GO" id="GO:0017148">
    <property type="term" value="P:negative regulation of translation"/>
    <property type="evidence" value="ECO:0007669"/>
    <property type="project" value="TreeGrafter"/>
</dbReference>
<dbReference type="GO" id="GO:0006412">
    <property type="term" value="P:translation"/>
    <property type="evidence" value="ECO:0007669"/>
    <property type="project" value="UniProtKB-UniRule"/>
</dbReference>
<dbReference type="CDD" id="cd00392">
    <property type="entry name" value="Ribosomal_L13"/>
    <property type="match status" value="1"/>
</dbReference>
<dbReference type="FunFam" id="3.90.1180.10:FF:000001">
    <property type="entry name" value="50S ribosomal protein L13"/>
    <property type="match status" value="1"/>
</dbReference>
<dbReference type="Gene3D" id="3.90.1180.10">
    <property type="entry name" value="Ribosomal protein L13"/>
    <property type="match status" value="1"/>
</dbReference>
<dbReference type="HAMAP" id="MF_01366">
    <property type="entry name" value="Ribosomal_uL13"/>
    <property type="match status" value="1"/>
</dbReference>
<dbReference type="InterPro" id="IPR005822">
    <property type="entry name" value="Ribosomal_uL13"/>
</dbReference>
<dbReference type="InterPro" id="IPR005823">
    <property type="entry name" value="Ribosomal_uL13_bac-type"/>
</dbReference>
<dbReference type="InterPro" id="IPR023563">
    <property type="entry name" value="Ribosomal_uL13_CS"/>
</dbReference>
<dbReference type="InterPro" id="IPR036899">
    <property type="entry name" value="Ribosomal_uL13_sf"/>
</dbReference>
<dbReference type="NCBIfam" id="TIGR01066">
    <property type="entry name" value="rplM_bact"/>
    <property type="match status" value="1"/>
</dbReference>
<dbReference type="PANTHER" id="PTHR11545:SF2">
    <property type="entry name" value="LARGE RIBOSOMAL SUBUNIT PROTEIN UL13M"/>
    <property type="match status" value="1"/>
</dbReference>
<dbReference type="PANTHER" id="PTHR11545">
    <property type="entry name" value="RIBOSOMAL PROTEIN L13"/>
    <property type="match status" value="1"/>
</dbReference>
<dbReference type="Pfam" id="PF00572">
    <property type="entry name" value="Ribosomal_L13"/>
    <property type="match status" value="1"/>
</dbReference>
<dbReference type="PIRSF" id="PIRSF002181">
    <property type="entry name" value="Ribosomal_L13"/>
    <property type="match status" value="1"/>
</dbReference>
<dbReference type="SUPFAM" id="SSF52161">
    <property type="entry name" value="Ribosomal protein L13"/>
    <property type="match status" value="1"/>
</dbReference>
<dbReference type="PROSITE" id="PS00783">
    <property type="entry name" value="RIBOSOMAL_L13"/>
    <property type="match status" value="1"/>
</dbReference>
<feature type="chain" id="PRO_1000144108" description="Large ribosomal subunit protein uL13">
    <location>
        <begin position="1"/>
        <end position="144"/>
    </location>
</feature>